<evidence type="ECO:0000255" key="1">
    <source>
        <dbReference type="HAMAP-Rule" id="MF_00796"/>
    </source>
</evidence>
<proteinExistence type="inferred from homology"/>
<accession>B1LAB2</accession>
<gene>
    <name type="ordered locus">TRQ2_0909</name>
</gene>
<reference key="1">
    <citation type="journal article" date="2011" name="J. Bacteriol.">
        <title>Genome sequence of Thermotoga sp. strain RQ2, a hyperthermophilic bacterium isolated from a geothermally heated region of the seafloor near Ribeira Quente, the Azores.</title>
        <authorList>
            <person name="Swithers K.S."/>
            <person name="DiPippo J.L."/>
            <person name="Bruce D.C."/>
            <person name="Detter C."/>
            <person name="Tapia R."/>
            <person name="Han S."/>
            <person name="Saunders E."/>
            <person name="Goodwin L.A."/>
            <person name="Han J."/>
            <person name="Woyke T."/>
            <person name="Pitluck S."/>
            <person name="Pennacchio L."/>
            <person name="Nolan M."/>
            <person name="Mikhailova N."/>
            <person name="Lykidis A."/>
            <person name="Land M.L."/>
            <person name="Brettin T."/>
            <person name="Stetter K.O."/>
            <person name="Nelson K.E."/>
            <person name="Gogarten J.P."/>
            <person name="Noll K.M."/>
        </authorList>
    </citation>
    <scope>NUCLEOTIDE SEQUENCE [LARGE SCALE GENOMIC DNA]</scope>
    <source>
        <strain>RQ2</strain>
    </source>
</reference>
<comment type="function">
    <text evidence="1">Has nucleotide phosphatase activity towards ATP, GTP, CTP, TTP and UTP. May hydrolyze nucleoside diphosphates with lower efficiency.</text>
</comment>
<comment type="catalytic activity">
    <reaction evidence="1">
        <text>a ribonucleoside 5'-triphosphate + H2O = a ribonucleoside 5'-diphosphate + phosphate + H(+)</text>
        <dbReference type="Rhea" id="RHEA:23680"/>
        <dbReference type="ChEBI" id="CHEBI:15377"/>
        <dbReference type="ChEBI" id="CHEBI:15378"/>
        <dbReference type="ChEBI" id="CHEBI:43474"/>
        <dbReference type="ChEBI" id="CHEBI:57930"/>
        <dbReference type="ChEBI" id="CHEBI:61557"/>
        <dbReference type="EC" id="3.6.1.15"/>
    </reaction>
</comment>
<comment type="similarity">
    <text evidence="1">Belongs to the THEP1 NTPase family.</text>
</comment>
<feature type="chain" id="PRO_0000360019" description="Nucleoside-triphosphatase THEP1">
    <location>
        <begin position="1"/>
        <end position="174"/>
    </location>
</feature>
<feature type="binding site" evidence="1">
    <location>
        <begin position="7"/>
        <end position="14"/>
    </location>
    <ligand>
        <name>ATP</name>
        <dbReference type="ChEBI" id="CHEBI:30616"/>
    </ligand>
</feature>
<feature type="binding site" evidence="1">
    <location>
        <begin position="94"/>
        <end position="101"/>
    </location>
    <ligand>
        <name>ATP</name>
        <dbReference type="ChEBI" id="CHEBI:30616"/>
    </ligand>
</feature>
<keyword id="KW-0067">ATP-binding</keyword>
<keyword id="KW-0378">Hydrolase</keyword>
<keyword id="KW-0547">Nucleotide-binding</keyword>
<protein>
    <recommendedName>
        <fullName evidence="1">Nucleoside-triphosphatase THEP1</fullName>
        <shortName evidence="1">NTPase THEP1</shortName>
        <ecNumber evidence="1">3.6.1.15</ecNumber>
    </recommendedName>
    <alternativeName>
        <fullName evidence="1">Nucleoside triphosphate phosphohydrolase</fullName>
    </alternativeName>
</protein>
<organism>
    <name type="scientific">Thermotoga sp. (strain RQ2)</name>
    <dbReference type="NCBI Taxonomy" id="126740"/>
    <lineage>
        <taxon>Bacteria</taxon>
        <taxon>Thermotogati</taxon>
        <taxon>Thermotogota</taxon>
        <taxon>Thermotogae</taxon>
        <taxon>Thermotogales</taxon>
        <taxon>Thermotogaceae</taxon>
        <taxon>Thermotoga</taxon>
    </lineage>
</organism>
<name>NTPTH_THESQ</name>
<sequence>MKILITGRPGVGKTTLIKKLSRLLQNAGGFYTEEMREDGKRIGFKIITLDGEEGILARTDLPSPYRVGKYYVNLKDLEEIGVRSLERAFQEKDLIIIDEIGKMELLSRKFREVVEKIFDSEKDVVATIKKSSDPFVEKIKNRNDVVIFELNEKNRNSLLNEILSVLKFNRGEKQ</sequence>
<dbReference type="EC" id="3.6.1.15" evidence="1"/>
<dbReference type="EMBL" id="CP000969">
    <property type="protein sequence ID" value="ACB09260.1"/>
    <property type="molecule type" value="Genomic_DNA"/>
</dbReference>
<dbReference type="RefSeq" id="WP_012310814.1">
    <property type="nucleotide sequence ID" value="NC_010483.1"/>
</dbReference>
<dbReference type="SMR" id="B1LAB2"/>
<dbReference type="KEGG" id="trq:TRQ2_0909"/>
<dbReference type="HOGENOM" id="CLU_103145_1_1_0"/>
<dbReference type="Proteomes" id="UP000001687">
    <property type="component" value="Chromosome"/>
</dbReference>
<dbReference type="GO" id="GO:0005524">
    <property type="term" value="F:ATP binding"/>
    <property type="evidence" value="ECO:0007669"/>
    <property type="project" value="UniProtKB-UniRule"/>
</dbReference>
<dbReference type="GO" id="GO:0016887">
    <property type="term" value="F:ATP hydrolysis activity"/>
    <property type="evidence" value="ECO:0007669"/>
    <property type="project" value="InterPro"/>
</dbReference>
<dbReference type="CDD" id="cd19482">
    <property type="entry name" value="RecA-like_Thep1"/>
    <property type="match status" value="1"/>
</dbReference>
<dbReference type="Gene3D" id="3.40.50.300">
    <property type="entry name" value="P-loop containing nucleotide triphosphate hydrolases"/>
    <property type="match status" value="1"/>
</dbReference>
<dbReference type="HAMAP" id="MF_00796">
    <property type="entry name" value="NTPase_1"/>
    <property type="match status" value="1"/>
</dbReference>
<dbReference type="InterPro" id="IPR003593">
    <property type="entry name" value="AAA+_ATPase"/>
</dbReference>
<dbReference type="InterPro" id="IPR004948">
    <property type="entry name" value="Nuc-triphosphatase_THEP1"/>
</dbReference>
<dbReference type="InterPro" id="IPR027417">
    <property type="entry name" value="P-loop_NTPase"/>
</dbReference>
<dbReference type="NCBIfam" id="NF010248">
    <property type="entry name" value="PRK13695.1"/>
    <property type="match status" value="1"/>
</dbReference>
<dbReference type="PANTHER" id="PTHR43146">
    <property type="entry name" value="CANCER-RELATED NUCLEOSIDE-TRIPHOSPHATASE"/>
    <property type="match status" value="1"/>
</dbReference>
<dbReference type="PANTHER" id="PTHR43146:SF1">
    <property type="entry name" value="CANCER-RELATED NUCLEOSIDE-TRIPHOSPHATASE"/>
    <property type="match status" value="1"/>
</dbReference>
<dbReference type="Pfam" id="PF03266">
    <property type="entry name" value="NTPase_1"/>
    <property type="match status" value="1"/>
</dbReference>
<dbReference type="SMART" id="SM00382">
    <property type="entry name" value="AAA"/>
    <property type="match status" value="1"/>
</dbReference>
<dbReference type="SUPFAM" id="SSF52540">
    <property type="entry name" value="P-loop containing nucleoside triphosphate hydrolases"/>
    <property type="match status" value="1"/>
</dbReference>